<gene>
    <name evidence="1" type="primary">psbL</name>
</gene>
<feature type="chain" id="PRO_0000219766" description="Photosystem II reaction center protein L">
    <location>
        <begin position="1"/>
        <end position="38"/>
    </location>
</feature>
<feature type="transmembrane region" description="Helical" evidence="1">
    <location>
        <begin position="17"/>
        <end position="37"/>
    </location>
</feature>
<proteinExistence type="inferred from homology"/>
<evidence type="ECO:0000255" key="1">
    <source>
        <dbReference type="HAMAP-Rule" id="MF_01317"/>
    </source>
</evidence>
<name>PSBL_SAGLA</name>
<dbReference type="EMBL" id="AY007484">
    <property type="protein sequence ID" value="AAG27020.1"/>
    <property type="molecule type" value="Genomic_DNA"/>
</dbReference>
<dbReference type="SMR" id="Q7HIU0"/>
<dbReference type="GO" id="GO:0009535">
    <property type="term" value="C:chloroplast thylakoid membrane"/>
    <property type="evidence" value="ECO:0007669"/>
    <property type="project" value="UniProtKB-SubCell"/>
</dbReference>
<dbReference type="GO" id="GO:0009539">
    <property type="term" value="C:photosystem II reaction center"/>
    <property type="evidence" value="ECO:0007669"/>
    <property type="project" value="InterPro"/>
</dbReference>
<dbReference type="GO" id="GO:0015979">
    <property type="term" value="P:photosynthesis"/>
    <property type="evidence" value="ECO:0007669"/>
    <property type="project" value="UniProtKB-UniRule"/>
</dbReference>
<dbReference type="HAMAP" id="MF_01317">
    <property type="entry name" value="PSII_PsbL"/>
    <property type="match status" value="1"/>
</dbReference>
<dbReference type="InterPro" id="IPR003372">
    <property type="entry name" value="PSII_PsbL"/>
</dbReference>
<dbReference type="InterPro" id="IPR037266">
    <property type="entry name" value="PSII_PsbL_sf"/>
</dbReference>
<dbReference type="NCBIfam" id="NF001972">
    <property type="entry name" value="PRK00753.1"/>
    <property type="match status" value="1"/>
</dbReference>
<dbReference type="Pfam" id="PF02419">
    <property type="entry name" value="PsbL"/>
    <property type="match status" value="1"/>
</dbReference>
<dbReference type="SUPFAM" id="SSF161017">
    <property type="entry name" value="Photosystem II reaction center protein L, PsbL"/>
    <property type="match status" value="1"/>
</dbReference>
<protein>
    <recommendedName>
        <fullName evidence="1">Photosystem II reaction center protein L</fullName>
        <shortName evidence="1">PSII-L</shortName>
    </recommendedName>
</protein>
<comment type="function">
    <text evidence="1">One of the components of the core complex of photosystem II (PSII). PSII is a light-driven water:plastoquinone oxidoreductase that uses light energy to abstract electrons from H(2)O, generating O(2) and a proton gradient subsequently used for ATP formation. It consists of a core antenna complex that captures photons, and an electron transfer chain that converts photonic excitation into a charge separation. This subunit is found at the monomer-monomer interface and is required for correct PSII assembly and/or dimerization.</text>
</comment>
<comment type="subunit">
    <text evidence="1">PSII is composed of 1 copy each of membrane proteins PsbA, PsbB, PsbC, PsbD, PsbE, PsbF, PsbH, PsbI, PsbJ, PsbK, PsbL, PsbM, PsbT, PsbX, PsbY, PsbZ, Psb30/Ycf12, at least 3 peripheral proteins of the oxygen-evolving complex and a large number of cofactors. It forms dimeric complexes.</text>
</comment>
<comment type="subcellular location">
    <subcellularLocation>
        <location evidence="1">Plastid</location>
        <location evidence="1">Chloroplast thylakoid membrane</location>
        <topology evidence="1">Single-pass membrane protein</topology>
    </subcellularLocation>
</comment>
<comment type="similarity">
    <text evidence="1">Belongs to the PsbL family.</text>
</comment>
<accession>Q7HIU0</accession>
<geneLocation type="chloroplast"/>
<reference key="1">
    <citation type="submission" date="2000-02" db="EMBL/GenBank/DDBJ databases">
        <title>Long branches in the seed plants and the root of the angiosperms.</title>
        <authorList>
            <person name="Graham S.W."/>
            <person name="Reeves P.A."/>
            <person name="Burns A."/>
            <person name="Olmstead R.G."/>
        </authorList>
    </citation>
    <scope>NUCLEOTIDE SEQUENCE [GENOMIC DNA]</scope>
</reference>
<keyword id="KW-0150">Chloroplast</keyword>
<keyword id="KW-0472">Membrane</keyword>
<keyword id="KW-0602">Photosynthesis</keyword>
<keyword id="KW-0604">Photosystem II</keyword>
<keyword id="KW-0934">Plastid</keyword>
<keyword id="KW-0674">Reaction center</keyword>
<keyword id="KW-0793">Thylakoid</keyword>
<keyword id="KW-0812">Transmembrane</keyword>
<keyword id="KW-1133">Transmembrane helix</keyword>
<organism>
    <name type="scientific">Sagittaria latifolia</name>
    <name type="common">Broadleaf arrowhead</name>
    <name type="synonym">Sagittaria chinensis</name>
    <dbReference type="NCBI Taxonomy" id="15008"/>
    <lineage>
        <taxon>Eukaryota</taxon>
        <taxon>Viridiplantae</taxon>
        <taxon>Streptophyta</taxon>
        <taxon>Embryophyta</taxon>
        <taxon>Tracheophyta</taxon>
        <taxon>Spermatophyta</taxon>
        <taxon>Magnoliopsida</taxon>
        <taxon>Liliopsida</taxon>
        <taxon>Alismataceae</taxon>
        <taxon>Sagittaria</taxon>
    </lineage>
</organism>
<sequence length="38" mass="4497">MTQSNPNEQNVELNRTSLYWGLLLIFVLAVLFSNYFFN</sequence>